<gene>
    <name type="ORF">ZK757.2</name>
</gene>
<keyword id="KW-0378">Hydrolase</keyword>
<keyword id="KW-0904">Protein phosphatase</keyword>
<keyword id="KW-1185">Reference proteome</keyword>
<feature type="chain" id="PRO_0000094928" description="Uncharacterized protein ZK757.2">
    <location>
        <begin position="1"/>
        <end position="294"/>
    </location>
</feature>
<feature type="domain" description="Tyrosine-protein phosphatase" evidence="1">
    <location>
        <begin position="13"/>
        <end position="151"/>
    </location>
</feature>
<feature type="region of interest" description="Disordered" evidence="2">
    <location>
        <begin position="234"/>
        <end position="294"/>
    </location>
</feature>
<feature type="active site" description="Phosphocysteine intermediate" evidence="1">
    <location>
        <position position="95"/>
    </location>
</feature>
<evidence type="ECO:0000255" key="1">
    <source>
        <dbReference type="PROSITE-ProRule" id="PRU00160"/>
    </source>
</evidence>
<evidence type="ECO:0000256" key="2">
    <source>
        <dbReference type="SAM" id="MobiDB-lite"/>
    </source>
</evidence>
<evidence type="ECO:0000305" key="3"/>
<protein>
    <recommendedName>
        <fullName>Uncharacterized protein ZK757.2</fullName>
    </recommendedName>
</protein>
<proteinExistence type="inferred from homology"/>
<accession>P34680</accession>
<name>YO42_CAEEL</name>
<sequence>MTSRRIINREQRQCSQIRPYLYVSGLAALSPRVLSRFCVCINLIPGFRLSAPPHMKVVHLPLQDNETTDLSPHWANVYKEIEEARKGAGRALLLCAMGISRSATFGIAYVMQYEKKTLHDSYKAVQLARNIICPNVGFFQQLIDLEQKLRGKVSCKIIEPLPGCKVPDVIWQELYDEMIMSMSQDDRHSLASCNLSARSTTNDTMSLRSLNMVNDTSRSLASFHLTHRPIGASPTLLVPSSSSSSSVRGPIPLQRAHTEPPKEASILPKSALRDKSKSGEKKKKWRLSFHKDVV</sequence>
<dbReference type="EMBL" id="Z29121">
    <property type="protein sequence ID" value="CAA82388.2"/>
    <property type="molecule type" value="Genomic_DNA"/>
</dbReference>
<dbReference type="PIR" id="S41012">
    <property type="entry name" value="S41012"/>
</dbReference>
<dbReference type="RefSeq" id="NP_499190.2">
    <property type="nucleotide sequence ID" value="NM_066789.7"/>
</dbReference>
<dbReference type="SMR" id="P34680"/>
<dbReference type="STRING" id="6239.ZK757.2.1"/>
<dbReference type="PaxDb" id="6239-ZK757.2"/>
<dbReference type="EnsemblMetazoa" id="ZK757.2.1">
    <property type="protein sequence ID" value="ZK757.2.1"/>
    <property type="gene ID" value="WBGene00014074"/>
</dbReference>
<dbReference type="EnsemblMetazoa" id="ZK757.2.2">
    <property type="protein sequence ID" value="ZK757.2.2"/>
    <property type="gene ID" value="WBGene00014074"/>
</dbReference>
<dbReference type="GeneID" id="191421"/>
<dbReference type="KEGG" id="cel:CELE_ZK757.2"/>
<dbReference type="UCSC" id="ZK757.2">
    <property type="organism name" value="c. elegans"/>
</dbReference>
<dbReference type="AGR" id="WB:WBGene00014074"/>
<dbReference type="CTD" id="191421"/>
<dbReference type="WormBase" id="ZK757.2">
    <property type="protein sequence ID" value="CE34151"/>
    <property type="gene ID" value="WBGene00014074"/>
</dbReference>
<dbReference type="eggNOG" id="KOG1716">
    <property type="taxonomic scope" value="Eukaryota"/>
</dbReference>
<dbReference type="HOGENOM" id="CLU_947413_0_0_1"/>
<dbReference type="InParanoid" id="P34680"/>
<dbReference type="OMA" id="VIWQELY"/>
<dbReference type="OrthoDB" id="285418at2759"/>
<dbReference type="PhylomeDB" id="P34680"/>
<dbReference type="PRO" id="PR:P34680"/>
<dbReference type="Proteomes" id="UP000001940">
    <property type="component" value="Chromosome III"/>
</dbReference>
<dbReference type="Bgee" id="WBGene00014074">
    <property type="expression patterns" value="Expressed in pharyngeal muscle cell (C elegans) and 3 other cell types or tissues"/>
</dbReference>
<dbReference type="GO" id="GO:0004721">
    <property type="term" value="F:phosphoprotein phosphatase activity"/>
    <property type="evidence" value="ECO:0007669"/>
    <property type="project" value="UniProtKB-KW"/>
</dbReference>
<dbReference type="CDD" id="cd14514">
    <property type="entry name" value="DUSP14-like"/>
    <property type="match status" value="1"/>
</dbReference>
<dbReference type="Gene3D" id="3.90.190.10">
    <property type="entry name" value="Protein tyrosine phosphatase superfamily"/>
    <property type="match status" value="1"/>
</dbReference>
<dbReference type="InterPro" id="IPR000340">
    <property type="entry name" value="Dual-sp_phosphatase_cat-dom"/>
</dbReference>
<dbReference type="InterPro" id="IPR052103">
    <property type="entry name" value="Dual_spec_Phospatases"/>
</dbReference>
<dbReference type="InterPro" id="IPR029021">
    <property type="entry name" value="Prot-tyrosine_phosphatase-like"/>
</dbReference>
<dbReference type="InterPro" id="IPR000387">
    <property type="entry name" value="Tyr_Pase_dom"/>
</dbReference>
<dbReference type="InterPro" id="IPR020422">
    <property type="entry name" value="TYR_PHOSPHATASE_DUAL_dom"/>
</dbReference>
<dbReference type="PANTHER" id="PTHR45961">
    <property type="entry name" value="IP21249P"/>
    <property type="match status" value="1"/>
</dbReference>
<dbReference type="PANTHER" id="PTHR45961:SF2">
    <property type="entry name" value="PROTEIN CBG09952"/>
    <property type="match status" value="1"/>
</dbReference>
<dbReference type="Pfam" id="PF00782">
    <property type="entry name" value="DSPc"/>
    <property type="match status" value="1"/>
</dbReference>
<dbReference type="SMART" id="SM00195">
    <property type="entry name" value="DSPc"/>
    <property type="match status" value="1"/>
</dbReference>
<dbReference type="SUPFAM" id="SSF52799">
    <property type="entry name" value="(Phosphotyrosine protein) phosphatases II"/>
    <property type="match status" value="1"/>
</dbReference>
<dbReference type="PROSITE" id="PS50056">
    <property type="entry name" value="TYR_PHOSPHATASE_2"/>
    <property type="match status" value="1"/>
</dbReference>
<dbReference type="PROSITE" id="PS50054">
    <property type="entry name" value="TYR_PHOSPHATASE_DUAL"/>
    <property type="match status" value="1"/>
</dbReference>
<comment type="similarity">
    <text evidence="3">Belongs to the protein-tyrosine phosphatase family. Non-receptor class dual specificity subfamily.</text>
</comment>
<reference key="1">
    <citation type="journal article" date="1994" name="Nature">
        <title>2.2 Mb of contiguous nucleotide sequence from chromosome III of C. elegans.</title>
        <authorList>
            <person name="Wilson R."/>
            <person name="Ainscough R."/>
            <person name="Anderson K."/>
            <person name="Baynes C."/>
            <person name="Berks M."/>
            <person name="Bonfield J."/>
            <person name="Burton J."/>
            <person name="Connell M."/>
            <person name="Copsey T."/>
            <person name="Cooper J."/>
            <person name="Coulson A."/>
            <person name="Craxton M."/>
            <person name="Dear S."/>
            <person name="Du Z."/>
            <person name="Durbin R."/>
            <person name="Favello A."/>
            <person name="Fraser A."/>
            <person name="Fulton L."/>
            <person name="Gardner A."/>
            <person name="Green P."/>
            <person name="Hawkins T."/>
            <person name="Hillier L."/>
            <person name="Jier M."/>
            <person name="Johnston L."/>
            <person name="Jones M."/>
            <person name="Kershaw J."/>
            <person name="Kirsten J."/>
            <person name="Laisster N."/>
            <person name="Latreille P."/>
            <person name="Lightning J."/>
            <person name="Lloyd C."/>
            <person name="Mortimore B."/>
            <person name="O'Callaghan M."/>
            <person name="Parsons J."/>
            <person name="Percy C."/>
            <person name="Rifken L."/>
            <person name="Roopra A."/>
            <person name="Saunders D."/>
            <person name="Shownkeen R."/>
            <person name="Sims M."/>
            <person name="Smaldon N."/>
            <person name="Smith A."/>
            <person name="Smith M."/>
            <person name="Sonnhammer E."/>
            <person name="Staden R."/>
            <person name="Sulston J."/>
            <person name="Thierry-Mieg J."/>
            <person name="Thomas K."/>
            <person name="Vaudin M."/>
            <person name="Vaughan K."/>
            <person name="Waterston R."/>
            <person name="Watson A."/>
            <person name="Weinstock L."/>
            <person name="Wilkinson-Sproat J."/>
            <person name="Wohldman P."/>
        </authorList>
    </citation>
    <scope>NUCLEOTIDE SEQUENCE [LARGE SCALE GENOMIC DNA]</scope>
    <source>
        <strain>Bristol N2</strain>
    </source>
</reference>
<reference key="2">
    <citation type="journal article" date="1998" name="Science">
        <title>Genome sequence of the nematode C. elegans: a platform for investigating biology.</title>
        <authorList>
            <consortium name="The C. elegans sequencing consortium"/>
        </authorList>
    </citation>
    <scope>NUCLEOTIDE SEQUENCE [LARGE SCALE GENOMIC DNA]</scope>
    <source>
        <strain>Bristol N2</strain>
    </source>
</reference>
<organism>
    <name type="scientific">Caenorhabditis elegans</name>
    <dbReference type="NCBI Taxonomy" id="6239"/>
    <lineage>
        <taxon>Eukaryota</taxon>
        <taxon>Metazoa</taxon>
        <taxon>Ecdysozoa</taxon>
        <taxon>Nematoda</taxon>
        <taxon>Chromadorea</taxon>
        <taxon>Rhabditida</taxon>
        <taxon>Rhabditina</taxon>
        <taxon>Rhabditomorpha</taxon>
        <taxon>Rhabditoidea</taxon>
        <taxon>Rhabditidae</taxon>
        <taxon>Peloderinae</taxon>
        <taxon>Caenorhabditis</taxon>
    </lineage>
</organism>